<gene>
    <name evidence="5" type="primary">BCHA2</name>
    <name evidence="7" type="ordered locus">At4g02660</name>
    <name evidence="8" type="ORF">T10P11.5</name>
</gene>
<accession>F4JHT3</accession>
<accession>Q9ZQX5</accession>
<feature type="chain" id="PRO_0000434033" description="BEACH domain-containing protein A2">
    <location>
        <begin position="1"/>
        <end position="3527"/>
    </location>
</feature>
<feature type="repeat" description="LRR 1" evidence="1">
    <location>
        <begin position="1447"/>
        <end position="1470"/>
    </location>
</feature>
<feature type="repeat" description="LRR 2" evidence="1">
    <location>
        <begin position="1499"/>
        <end position="1522"/>
    </location>
</feature>
<feature type="repeat" description="LRR 3" evidence="1">
    <location>
        <begin position="1542"/>
        <end position="1565"/>
    </location>
</feature>
<feature type="repeat" description="LRR 4" evidence="1">
    <location>
        <begin position="1566"/>
        <end position="1588"/>
    </location>
</feature>
<feature type="repeat" description="LRR 5" evidence="1">
    <location>
        <begin position="2001"/>
        <end position="2024"/>
    </location>
</feature>
<feature type="repeat" description="LRR 6" evidence="1">
    <location>
        <begin position="2128"/>
        <end position="2151"/>
    </location>
</feature>
<feature type="repeat" description="LRR 7" evidence="1">
    <location>
        <begin position="2221"/>
        <end position="2247"/>
    </location>
</feature>
<feature type="repeat" description="LRR 8" evidence="1">
    <location>
        <begin position="2313"/>
        <end position="2336"/>
    </location>
</feature>
<feature type="domain" description="BEACH-type PH" evidence="3">
    <location>
        <begin position="2704"/>
        <end position="2871"/>
    </location>
</feature>
<feature type="domain" description="BEACH" evidence="2">
    <location>
        <begin position="2896"/>
        <end position="3188"/>
    </location>
</feature>
<feature type="repeat" description="WD 1" evidence="1">
    <location>
        <begin position="3272"/>
        <end position="3311"/>
    </location>
</feature>
<feature type="repeat" description="WD 2" evidence="1">
    <location>
        <begin position="3322"/>
        <end position="3361"/>
    </location>
</feature>
<feature type="repeat" description="WD 3" evidence="1">
    <location>
        <begin position="3410"/>
        <end position="3451"/>
    </location>
</feature>
<feature type="repeat" description="WD 4" evidence="1">
    <location>
        <begin position="3483"/>
        <end position="3522"/>
    </location>
</feature>
<feature type="region of interest" description="Disordered" evidence="4">
    <location>
        <begin position="25"/>
        <end position="46"/>
    </location>
</feature>
<feature type="region of interest" description="Disordered" evidence="4">
    <location>
        <begin position="385"/>
        <end position="423"/>
    </location>
</feature>
<feature type="region of interest" description="Disordered" evidence="4">
    <location>
        <begin position="454"/>
        <end position="490"/>
    </location>
</feature>
<feature type="region of interest" description="Disordered" evidence="4">
    <location>
        <begin position="1992"/>
        <end position="2023"/>
    </location>
</feature>
<feature type="region of interest" description="Disordered" evidence="4">
    <location>
        <begin position="2046"/>
        <end position="2081"/>
    </location>
</feature>
<feature type="region of interest" description="Disordered" evidence="4">
    <location>
        <begin position="2658"/>
        <end position="2680"/>
    </location>
</feature>
<feature type="compositionally biased region" description="Low complexity" evidence="4">
    <location>
        <begin position="28"/>
        <end position="46"/>
    </location>
</feature>
<feature type="compositionally biased region" description="Low complexity" evidence="4">
    <location>
        <begin position="455"/>
        <end position="469"/>
    </location>
</feature>
<feature type="compositionally biased region" description="Polar residues" evidence="4">
    <location>
        <begin position="472"/>
        <end position="481"/>
    </location>
</feature>
<feature type="compositionally biased region" description="Polar residues" evidence="4">
    <location>
        <begin position="1998"/>
        <end position="2020"/>
    </location>
</feature>
<feature type="compositionally biased region" description="Polar residues" evidence="4">
    <location>
        <begin position="2666"/>
        <end position="2675"/>
    </location>
</feature>
<name>BCHA2_ARATH</name>
<evidence type="ECO:0000255" key="1"/>
<evidence type="ECO:0000255" key="2">
    <source>
        <dbReference type="PROSITE-ProRule" id="PRU00026"/>
    </source>
</evidence>
<evidence type="ECO:0000255" key="3">
    <source>
        <dbReference type="PROSITE-ProRule" id="PRU01119"/>
    </source>
</evidence>
<evidence type="ECO:0000256" key="4">
    <source>
        <dbReference type="SAM" id="MobiDB-lite"/>
    </source>
</evidence>
<evidence type="ECO:0000303" key="5">
    <source>
    </source>
</evidence>
<evidence type="ECO:0000305" key="6"/>
<evidence type="ECO:0000312" key="7">
    <source>
        <dbReference type="Araport" id="AT4G02660"/>
    </source>
</evidence>
<evidence type="ECO:0000312" key="8">
    <source>
        <dbReference type="EMBL" id="AAC78268.1"/>
    </source>
</evidence>
<evidence type="ECO:0000312" key="9">
    <source>
        <dbReference type="Proteomes" id="UP000006548"/>
    </source>
</evidence>
<reference key="1">
    <citation type="journal article" date="1999" name="Nature">
        <title>Sequence and analysis of chromosome 4 of the plant Arabidopsis thaliana.</title>
        <authorList>
            <person name="Mayer K.F.X."/>
            <person name="Schueller C."/>
            <person name="Wambutt R."/>
            <person name="Murphy G."/>
            <person name="Volckaert G."/>
            <person name="Pohl T."/>
            <person name="Duesterhoeft A."/>
            <person name="Stiekema W."/>
            <person name="Entian K.-D."/>
            <person name="Terryn N."/>
            <person name="Harris B."/>
            <person name="Ansorge W."/>
            <person name="Brandt P."/>
            <person name="Grivell L.A."/>
            <person name="Rieger M."/>
            <person name="Weichselgartner M."/>
            <person name="de Simone V."/>
            <person name="Obermaier B."/>
            <person name="Mache R."/>
            <person name="Mueller M."/>
            <person name="Kreis M."/>
            <person name="Delseny M."/>
            <person name="Puigdomenech P."/>
            <person name="Watson M."/>
            <person name="Schmidtheini T."/>
            <person name="Reichert B."/>
            <person name="Portetelle D."/>
            <person name="Perez-Alonso M."/>
            <person name="Boutry M."/>
            <person name="Bancroft I."/>
            <person name="Vos P."/>
            <person name="Hoheisel J."/>
            <person name="Zimmermann W."/>
            <person name="Wedler H."/>
            <person name="Ridley P."/>
            <person name="Langham S.-A."/>
            <person name="McCullagh B."/>
            <person name="Bilham L."/>
            <person name="Robben J."/>
            <person name="van der Schueren J."/>
            <person name="Grymonprez B."/>
            <person name="Chuang Y.-J."/>
            <person name="Vandenbussche F."/>
            <person name="Braeken M."/>
            <person name="Weltjens I."/>
            <person name="Voet M."/>
            <person name="Bastiaens I."/>
            <person name="Aert R."/>
            <person name="Defoor E."/>
            <person name="Weitzenegger T."/>
            <person name="Bothe G."/>
            <person name="Ramsperger U."/>
            <person name="Hilbert H."/>
            <person name="Braun M."/>
            <person name="Holzer E."/>
            <person name="Brandt A."/>
            <person name="Peters S."/>
            <person name="van Staveren M."/>
            <person name="Dirkse W."/>
            <person name="Mooijman P."/>
            <person name="Klein Lankhorst R."/>
            <person name="Rose M."/>
            <person name="Hauf J."/>
            <person name="Koetter P."/>
            <person name="Berneiser S."/>
            <person name="Hempel S."/>
            <person name="Feldpausch M."/>
            <person name="Lamberth S."/>
            <person name="Van den Daele H."/>
            <person name="De Keyser A."/>
            <person name="Buysshaert C."/>
            <person name="Gielen J."/>
            <person name="Villarroel R."/>
            <person name="De Clercq R."/>
            <person name="van Montagu M."/>
            <person name="Rogers J."/>
            <person name="Cronin A."/>
            <person name="Quail M.A."/>
            <person name="Bray-Allen S."/>
            <person name="Clark L."/>
            <person name="Doggett J."/>
            <person name="Hall S."/>
            <person name="Kay M."/>
            <person name="Lennard N."/>
            <person name="McLay K."/>
            <person name="Mayes R."/>
            <person name="Pettett A."/>
            <person name="Rajandream M.A."/>
            <person name="Lyne M."/>
            <person name="Benes V."/>
            <person name="Rechmann S."/>
            <person name="Borkova D."/>
            <person name="Bloecker H."/>
            <person name="Scharfe M."/>
            <person name="Grimm M."/>
            <person name="Loehnert T.-H."/>
            <person name="Dose S."/>
            <person name="de Haan M."/>
            <person name="Maarse A.C."/>
            <person name="Schaefer M."/>
            <person name="Mueller-Auer S."/>
            <person name="Gabel C."/>
            <person name="Fuchs M."/>
            <person name="Fartmann B."/>
            <person name="Granderath K."/>
            <person name="Dauner D."/>
            <person name="Herzl A."/>
            <person name="Neumann S."/>
            <person name="Argiriou A."/>
            <person name="Vitale D."/>
            <person name="Liguori R."/>
            <person name="Piravandi E."/>
            <person name="Massenet O."/>
            <person name="Quigley F."/>
            <person name="Clabauld G."/>
            <person name="Muendlein A."/>
            <person name="Felber R."/>
            <person name="Schnabl S."/>
            <person name="Hiller R."/>
            <person name="Schmidt W."/>
            <person name="Lecharny A."/>
            <person name="Aubourg S."/>
            <person name="Chefdor F."/>
            <person name="Cooke R."/>
            <person name="Berger C."/>
            <person name="Monfort A."/>
            <person name="Casacuberta E."/>
            <person name="Gibbons T."/>
            <person name="Weber N."/>
            <person name="Vandenbol M."/>
            <person name="Bargues M."/>
            <person name="Terol J."/>
            <person name="Torres A."/>
            <person name="Perez-Perez A."/>
            <person name="Purnelle B."/>
            <person name="Bent E."/>
            <person name="Johnson S."/>
            <person name="Tacon D."/>
            <person name="Jesse T."/>
            <person name="Heijnen L."/>
            <person name="Schwarz S."/>
            <person name="Scholler P."/>
            <person name="Heber S."/>
            <person name="Francs P."/>
            <person name="Bielke C."/>
            <person name="Frishman D."/>
            <person name="Haase D."/>
            <person name="Lemcke K."/>
            <person name="Mewes H.-W."/>
            <person name="Stocker S."/>
            <person name="Zaccaria P."/>
            <person name="Bevan M."/>
            <person name="Wilson R.K."/>
            <person name="de la Bastide M."/>
            <person name="Habermann K."/>
            <person name="Parnell L."/>
            <person name="Dedhia N."/>
            <person name="Gnoj L."/>
            <person name="Schutz K."/>
            <person name="Huang E."/>
            <person name="Spiegel L."/>
            <person name="Sekhon M."/>
            <person name="Murray J."/>
            <person name="Sheet P."/>
            <person name="Cordes M."/>
            <person name="Abu-Threideh J."/>
            <person name="Stoneking T."/>
            <person name="Kalicki J."/>
            <person name="Graves T."/>
            <person name="Harmon G."/>
            <person name="Edwards J."/>
            <person name="Latreille P."/>
            <person name="Courtney L."/>
            <person name="Cloud J."/>
            <person name="Abbott A."/>
            <person name="Scott K."/>
            <person name="Johnson D."/>
            <person name="Minx P."/>
            <person name="Bentley D."/>
            <person name="Fulton B."/>
            <person name="Miller N."/>
            <person name="Greco T."/>
            <person name="Kemp K."/>
            <person name="Kramer J."/>
            <person name="Fulton L."/>
            <person name="Mardis E."/>
            <person name="Dante M."/>
            <person name="Pepin K."/>
            <person name="Hillier L.W."/>
            <person name="Nelson J."/>
            <person name="Spieth J."/>
            <person name="Ryan E."/>
            <person name="Andrews S."/>
            <person name="Geisel C."/>
            <person name="Layman D."/>
            <person name="Du H."/>
            <person name="Ali J."/>
            <person name="Berghoff A."/>
            <person name="Jones K."/>
            <person name="Drone K."/>
            <person name="Cotton M."/>
            <person name="Joshu C."/>
            <person name="Antonoiu B."/>
            <person name="Zidanic M."/>
            <person name="Strong C."/>
            <person name="Sun H."/>
            <person name="Lamar B."/>
            <person name="Yordan C."/>
            <person name="Ma P."/>
            <person name="Zhong J."/>
            <person name="Preston R."/>
            <person name="Vil D."/>
            <person name="Shekher M."/>
            <person name="Matero A."/>
            <person name="Shah R."/>
            <person name="Swaby I.K."/>
            <person name="O'Shaughnessy A."/>
            <person name="Rodriguez M."/>
            <person name="Hoffman J."/>
            <person name="Till S."/>
            <person name="Granat S."/>
            <person name="Shohdy N."/>
            <person name="Hasegawa A."/>
            <person name="Hameed A."/>
            <person name="Lodhi M."/>
            <person name="Johnson A."/>
            <person name="Chen E."/>
            <person name="Marra M.A."/>
            <person name="Martienssen R."/>
            <person name="McCombie W.R."/>
        </authorList>
    </citation>
    <scope>NUCLEOTIDE SEQUENCE [LARGE SCALE GENOMIC DNA]</scope>
    <source>
        <strain evidence="9">cv. Columbia</strain>
    </source>
</reference>
<reference key="2">
    <citation type="journal article" date="2017" name="Plant J.">
        <title>Araport11: a complete reannotation of the Arabidopsis thaliana reference genome.</title>
        <authorList>
            <person name="Cheng C.Y."/>
            <person name="Krishnakumar V."/>
            <person name="Chan A.P."/>
            <person name="Thibaud-Nissen F."/>
            <person name="Schobel S."/>
            <person name="Town C.D."/>
        </authorList>
    </citation>
    <scope>GENOME REANNOTATION</scope>
    <source>
        <strain>cv. Columbia</strain>
    </source>
</reference>
<reference key="3">
    <citation type="journal article" date="2015" name="Mol. Plant">
        <title>BEACH-domain proteins act together in a cascade to mediate vacuolar protein trafficking and disease resistance in Arabidopsis.</title>
        <authorList>
            <person name="Teh O.K."/>
            <person name="Hatsugai N."/>
            <person name="Tamura K."/>
            <person name="Fuji K."/>
            <person name="Tabata R."/>
            <person name="Yamaguchi K."/>
            <person name="Shingenobu S."/>
            <person name="Yamada M."/>
            <person name="Hasebe M."/>
            <person name="Sawa S."/>
            <person name="Shimada T."/>
            <person name="Hara-Nishimura I."/>
        </authorList>
    </citation>
    <scope>GENE FAMILY</scope>
    <scope>NOMENCLATURE</scope>
</reference>
<protein>
    <recommendedName>
        <fullName evidence="5">BEACH domain-containing protein A2</fullName>
    </recommendedName>
    <alternativeName>
        <fullName evidence="6">BEACH-domain homolog A2</fullName>
    </alternativeName>
</protein>
<comment type="sequence caution" evidence="6">
    <conflict type="erroneous gene model prediction">
        <sequence resource="EMBL-CDS" id="AAC78268"/>
    </conflict>
</comment>
<comment type="sequence caution" evidence="6">
    <conflict type="erroneous gene model prediction">
        <sequence resource="EMBL-CDS" id="CAB77751"/>
    </conflict>
</comment>
<sequence length="3527" mass="393325">MKWGTLLKDLKDKVGVAETTADLIAGEAISDPTTPPSSSQASPSSSFAALAQHDFNLLSPTSRDKLKLELDFKRYWEEFRSSSSEQEKEAALNLSVNTFCRLVKQHANVDQLVTMLVEPHIFSFVIGRAFVADVEKLKVSSRKRSLDVEKAIEFFSEVTKDGSSHGANLLTAIEVLASGPFDKQSLLDSGILCCLIHTFNAFLTYSVASEGEKTVNYEEKVEGSVVNIMKALASHPSAAQSLIEDDSLQLLFKMVANGSLMAFSRFKVGLVSFHNIQLHKNAMQILGLLLVNDNGSTASYIRKHHLIKVLLMAVKDFDPDCGDSAYTVGIVDLLLECVELSYRPETGGVRLKDDIRNAHGYHFLVQFALILSSMPKDIVFAFDHSSPHKNRGSNDSKKQPPLSLKTRQNDDSEKQQSLSLNSRQNDEFALKHFSPALSRLLDVLVTLAQTGPIESSGTSTSLLSQTKLTGYSRRQTPSANNRYDEPCEQGSGKVKDLEAVQMLQDIFLKAENKDLQAEVLNRMFKIFTSHLENYRICQELKTVPLLVLNMGGFPSSLQELILKILEYAVTVVNCVPEQELLSLCFLLQQPIDSELKHTILSFFVKLTSFDQQYKKVLGEVGVLEVLQDDLKQHKLLRGPDQYSGVSNHLDRVPSSPSFKQHLDSQDAIISSPKLMESGSGKLPIFEVERTITVGWDCMISLLKNSQVNQEAFRSANGVTVILPFLIADEHRTSILRIFSCLITGDIKQVHHEELEALIDVLKSGMVTRVSGDQYKLHYEVRCDIMGALWRIVGVNGSAQRVFGEATGFSLLLTTLHTFQGEEECRDESHLMVYIKLFKHLLRLITTAVCENAINRMKLHSVITSQTFYDLLVESGLLCVDLERHVIQLLLELALEVLVPPFLTSESMASAEMAECEKASFLVKTASGQFNPDKQKIYNAGAVRVLIRSLLLCTPKLQLEFLNLLERLARASPFNKETLTSAGCVELLLEIIYPFLQGSSPFLSHALKIVEVLGAYRLSPSELKMLCRYVMQMRVMNSGPSLIGMMEKLILMEEDTGLECVSLAPFVEMDMSKTGHASVQVSLGERSWPPAAGYSFVCWVQFRNFLTTQELESEVYKAGGSSKTPILSGQQSEQNIFRIFSVNAISNGSPSYAELYFQEDGILTLATSNSNSLSFSGLETEEGKWHHLAVVHSKPNALAGLFQASVAYVYIDGKLRHMGKLGYSPSPVGKSLQVIIGTSATCARACGGDSMAILDLLDTDMSSGIQKFEDSNRQGDSKAHCSGIVWDLDRLGNLSIQLPGKKLIFAFDGTCSEFMRATGSFSLVNLVDPLSAAASLIGGIPRFGRLVGNVSLCRQNVIGNSIRPVGGMAVVLALVEAAESRDMLHMALSLLACALHQNSQNVKDMETYTGYHLLALFLRPKMALFDMQCLEIFFQISACEAFFSEPKKLESGQTTISMSPTEIIPENNYEDPTLCKFQYETSSVGSHGDMDDFSGRKDSFSHLSELEMGDNPVETSNCIVLSNADMVEHVLLDWTLWVTAPVSIQIASLGFLENLISILWYRSHNLAILRQINLVKHLLVTLQRGDVEVLVLEKLVILLRCILENGFLTPELEDVVRFAIMTFNPPEIKSQNSSMRESMGKHVIVRNLVLEMLIDLQVTIKAEELLEQWHKTVSSKLITYFLDGAVHPSSMRWIMTLLGVCLTSSPNFSLKFFASGGYQGLVRVLQSFYDSPDIYYILFCLIFGKPVYPRLPEVRMLDFHALMPDDGSHVELNFVDLLDSVVAMAKSTFDRLIMQSMLAHQSGNLSQVSARCVAELVEGYADMTGELQGKALMHKTYAARLMGGEASAPATATSVIRFMVDLAKMCPQFSAACKNTEFLQKCADLYFSCVRAFHAVKLAKQLSMKAEEQNITGGDDSSVEGNFCRVSHQDMSTKTSISAGSFPQDQTSSVISVDMYIPSDYVAVDKVENFLTTPPGESNKSFQGREYIAKQDGDHVGSVSASSEMKSLDLTGSSSQVQPIDSRSSESFSMLESPLLSEKSSLEVPFIPSPSKSSTISTPHPSHISVSEFDASSDQSSGSQGSSAVHTLFTISPKVLLETDESGYGGGPCSAGASAVLDFMAEVCADIMTEQIKAVQALESILEMLPLYVDPECVVVFQGLCLSRVMNYLERRFLRDDEEDDKKLDKRKWSANLDAFCWMIVDRVYMGAFPQPTGVLRTLEFLLSILQLANKDGRVEEVTSSGKGLLSIGRATRQLDAYVHSILKNTNRTILYCFLPSFLITIGEEDLPSRLGLLVESTKKQTSKLSGKESGIDVSAVLQLLVANKNIILCPSNLDTDLNCCLCVNLISLLHDQRKNVQNMASNIIKYLLVHRKSALEDLLVKKPHRGQKFDVLHGGFDRLLTGNLPEFSKWLESSEQIITKVLEQGAAVMWIQYIAGSAKFPDVRMKGMDGRRTREMGRKLRDTSKLDLKHWEQVNERRYALEVVRDAMSAELRVVRQNKYGLILHAESVWPTHLQQLVHERGIFPMRISHGVEDLKWQLCPIEGPYRMRKKLERCKLKIDSLHNLLEGKLELGEIELLKSKSEDGLVISDMDSEPAFLLSELYSESFSEEADDLKDVPSARNGWNNDRATSTNAASLHNSLSFGGKSSSTAVSVPISVNTDEKSETGSPIKSSSGKMDEIKHVEEESEKELKDDGEYLIRPYLEHLEKIRFRYNCERVVGLDKHDGIFLIGELCLYVIENFYIDDHGCICEKECEDELSIIDQAQGLKKQFHGSLESKSKSSTLWSTTIKIGAVGGRAWAYGGGAWGKEKVRVTGNLPHPWHMWKLDSVHEILKRDYELRRVAVEIFSMDGCNDLLVFHKKEREEVFRNLLAMNLPRNSMLDTTISGSAKQESKEGSRLFKLMAKSFTKRWQNGEISNFQYLMHLNTLAGRGYSDLTQYPVFPWILADYDGESLDLSDPNNFRKLDKPMGCQTPEGEEEFRKRYESWDDPEVPQFHYGSHYSSAGIVLFYLIRLPPFSAENQKLQGGQFDHADRLFNSIRETWLSAAGKGNTSDVKELIPEFFYMPEFLENRFNLDLGEKQSGDKVGDVILPPWARGSVREFIRKHREALESDYVSENLHHWIDLIFGHKQRGKAAENAVNVFYHYTYEGNVDVDAVTDPAMKASILAQINHFGQTPKQLFQKPHVKRRTDRKVPPHPLKHSMHLVPRNIRKCSSSINQIITFNDKLLLTGANCLLKPRGYKKYIRWGFPDRTLRFMSYDQDKLLSTHENLHEGNQIQCAGVSHDGRIVVTGAEDGLVSVWRVSKDGPRGSRRLRLEKSLCAHTAKVICLRVSQPYMMIASSSDDCTVIIWDLSSLSFVRQLPNFSVPVTVVYINDLTGEIVTAAGSVLAVWSINGDCLSVVNTSQLPTDLIVSVAGSTFSDWLETTWYVTGHQSGALKVWRMVHCTDPVSVPSKTPSNRTGGLNLGNQKPEYKLLLHKELKFHKQPVTSLHLTTDLKQLLSGDSAGHLLSWTVPDEILKASLKKAS</sequence>
<proteinExistence type="predicted"/>
<keyword id="KW-0433">Leucine-rich repeat</keyword>
<keyword id="KW-1185">Reference proteome</keyword>
<keyword id="KW-0677">Repeat</keyword>
<keyword id="KW-0853">WD repeat</keyword>
<dbReference type="EMBL" id="AC002330">
    <property type="protein sequence ID" value="AAC78268.1"/>
    <property type="status" value="ALT_SEQ"/>
    <property type="molecule type" value="Genomic_DNA"/>
</dbReference>
<dbReference type="EMBL" id="AL161495">
    <property type="protein sequence ID" value="CAB77751.1"/>
    <property type="status" value="ALT_SEQ"/>
    <property type="molecule type" value="Genomic_DNA"/>
</dbReference>
<dbReference type="EMBL" id="CP002687">
    <property type="protein sequence ID" value="AEE82211.1"/>
    <property type="molecule type" value="Genomic_DNA"/>
</dbReference>
<dbReference type="EMBL" id="CP002687">
    <property type="protein sequence ID" value="ANM67565.1"/>
    <property type="molecule type" value="Genomic_DNA"/>
</dbReference>
<dbReference type="PIR" id="T01083">
    <property type="entry name" value="T01083"/>
</dbReference>
<dbReference type="RefSeq" id="NP_001319850.1">
    <property type="nucleotide sequence ID" value="NM_001340392.1"/>
</dbReference>
<dbReference type="RefSeq" id="NP_192175.3">
    <property type="nucleotide sequence ID" value="NM_116500.3"/>
</dbReference>
<dbReference type="SMR" id="F4JHT3"/>
<dbReference type="FunCoup" id="F4JHT3">
    <property type="interactions" value="1380"/>
</dbReference>
<dbReference type="STRING" id="3702.F4JHT3"/>
<dbReference type="iPTMnet" id="F4JHT3"/>
<dbReference type="PaxDb" id="3702-AT4G02660.1"/>
<dbReference type="EnsemblPlants" id="AT4G02660.1">
    <property type="protein sequence ID" value="AT4G02660.1"/>
    <property type="gene ID" value="AT4G02660"/>
</dbReference>
<dbReference type="EnsemblPlants" id="AT4G02660.3">
    <property type="protein sequence ID" value="AT4G02660.3"/>
    <property type="gene ID" value="AT4G02660"/>
</dbReference>
<dbReference type="GeneID" id="828210"/>
<dbReference type="Gramene" id="AT4G02660.1">
    <property type="protein sequence ID" value="AT4G02660.1"/>
    <property type="gene ID" value="AT4G02660"/>
</dbReference>
<dbReference type="Gramene" id="AT4G02660.3">
    <property type="protein sequence ID" value="AT4G02660.3"/>
    <property type="gene ID" value="AT4G02660"/>
</dbReference>
<dbReference type="KEGG" id="ath:AT4G02660"/>
<dbReference type="Araport" id="AT4G02660"/>
<dbReference type="TAIR" id="AT4G02660">
    <property type="gene designation" value="BCHA2"/>
</dbReference>
<dbReference type="eggNOG" id="KOG1786">
    <property type="taxonomic scope" value="Eukaryota"/>
</dbReference>
<dbReference type="eggNOG" id="KOG1788">
    <property type="taxonomic scope" value="Eukaryota"/>
</dbReference>
<dbReference type="HOGENOM" id="CLU_000175_4_0_1"/>
<dbReference type="InParanoid" id="F4JHT3"/>
<dbReference type="PRO" id="PR:F4JHT3"/>
<dbReference type="Proteomes" id="UP000006548">
    <property type="component" value="Chromosome 4"/>
</dbReference>
<dbReference type="ExpressionAtlas" id="F4JHT3">
    <property type="expression patterns" value="baseline and differential"/>
</dbReference>
<dbReference type="GO" id="GO:0009507">
    <property type="term" value="C:chloroplast"/>
    <property type="evidence" value="ECO:0007005"/>
    <property type="project" value="TAIR"/>
</dbReference>
<dbReference type="CDD" id="cd06071">
    <property type="entry name" value="Beach"/>
    <property type="match status" value="1"/>
</dbReference>
<dbReference type="CDD" id="cd01201">
    <property type="entry name" value="PH_BEACH"/>
    <property type="match status" value="1"/>
</dbReference>
<dbReference type="FunFam" id="1.10.1540.10:FF:000002">
    <property type="entry name" value="WD repeat and FYVE domain containing 3"/>
    <property type="match status" value="1"/>
</dbReference>
<dbReference type="Gene3D" id="2.60.120.200">
    <property type="match status" value="1"/>
</dbReference>
<dbReference type="Gene3D" id="1.10.1540.10">
    <property type="entry name" value="BEACH domain"/>
    <property type="match status" value="1"/>
</dbReference>
<dbReference type="Gene3D" id="1.25.10.10">
    <property type="entry name" value="Leucine-rich Repeat Variant"/>
    <property type="match status" value="2"/>
</dbReference>
<dbReference type="Gene3D" id="2.30.29.30">
    <property type="entry name" value="Pleckstrin-homology domain (PH domain)/Phosphotyrosine-binding domain (PTB)"/>
    <property type="match status" value="1"/>
</dbReference>
<dbReference type="Gene3D" id="2.130.10.10">
    <property type="entry name" value="YVTN repeat-like/Quinoprotein amine dehydrogenase"/>
    <property type="match status" value="1"/>
</dbReference>
<dbReference type="InterPro" id="IPR056252">
    <property type="entry name" value="Alfy-like_Arm-like"/>
</dbReference>
<dbReference type="InterPro" id="IPR011989">
    <property type="entry name" value="ARM-like"/>
</dbReference>
<dbReference type="InterPro" id="IPR016024">
    <property type="entry name" value="ARM-type_fold"/>
</dbReference>
<dbReference type="InterPro" id="IPR000409">
    <property type="entry name" value="BEACH_dom"/>
</dbReference>
<dbReference type="InterPro" id="IPR036372">
    <property type="entry name" value="BEACH_dom_sf"/>
</dbReference>
<dbReference type="InterPro" id="IPR051944">
    <property type="entry name" value="BEACH_domain_protein"/>
</dbReference>
<dbReference type="InterPro" id="IPR013320">
    <property type="entry name" value="ConA-like_dom_sf"/>
</dbReference>
<dbReference type="InterPro" id="IPR023362">
    <property type="entry name" value="PH-BEACH_dom"/>
</dbReference>
<dbReference type="InterPro" id="IPR011993">
    <property type="entry name" value="PH-like_dom_sf"/>
</dbReference>
<dbReference type="InterPro" id="IPR015943">
    <property type="entry name" value="WD40/YVTN_repeat-like_dom_sf"/>
</dbReference>
<dbReference type="InterPro" id="IPR019775">
    <property type="entry name" value="WD40_repeat_CS"/>
</dbReference>
<dbReference type="InterPro" id="IPR036322">
    <property type="entry name" value="WD40_repeat_dom_sf"/>
</dbReference>
<dbReference type="InterPro" id="IPR001680">
    <property type="entry name" value="WD40_rpt"/>
</dbReference>
<dbReference type="PANTHER" id="PTHR46108">
    <property type="entry name" value="BLUE CHEESE"/>
    <property type="match status" value="1"/>
</dbReference>
<dbReference type="PANTHER" id="PTHR46108:SF4">
    <property type="entry name" value="BLUE CHEESE"/>
    <property type="match status" value="1"/>
</dbReference>
<dbReference type="Pfam" id="PF23295">
    <property type="entry name" value="Arm_4"/>
    <property type="match status" value="1"/>
</dbReference>
<dbReference type="Pfam" id="PF02138">
    <property type="entry name" value="Beach"/>
    <property type="match status" value="1"/>
</dbReference>
<dbReference type="Pfam" id="PF14844">
    <property type="entry name" value="PH_BEACH"/>
    <property type="match status" value="1"/>
</dbReference>
<dbReference type="Pfam" id="PF00400">
    <property type="entry name" value="WD40"/>
    <property type="match status" value="2"/>
</dbReference>
<dbReference type="SMART" id="SM01026">
    <property type="entry name" value="Beach"/>
    <property type="match status" value="1"/>
</dbReference>
<dbReference type="SMART" id="SM00320">
    <property type="entry name" value="WD40"/>
    <property type="match status" value="4"/>
</dbReference>
<dbReference type="SUPFAM" id="SSF48371">
    <property type="entry name" value="ARM repeat"/>
    <property type="match status" value="2"/>
</dbReference>
<dbReference type="SUPFAM" id="SSF81837">
    <property type="entry name" value="BEACH domain"/>
    <property type="match status" value="1"/>
</dbReference>
<dbReference type="SUPFAM" id="SSF49899">
    <property type="entry name" value="Concanavalin A-like lectins/glucanases"/>
    <property type="match status" value="1"/>
</dbReference>
<dbReference type="SUPFAM" id="SSF50729">
    <property type="entry name" value="PH domain-like"/>
    <property type="match status" value="1"/>
</dbReference>
<dbReference type="SUPFAM" id="SSF50978">
    <property type="entry name" value="WD40 repeat-like"/>
    <property type="match status" value="1"/>
</dbReference>
<dbReference type="PROSITE" id="PS50197">
    <property type="entry name" value="BEACH"/>
    <property type="match status" value="1"/>
</dbReference>
<dbReference type="PROSITE" id="PS51783">
    <property type="entry name" value="PH_BEACH"/>
    <property type="match status" value="1"/>
</dbReference>
<dbReference type="PROSITE" id="PS00678">
    <property type="entry name" value="WD_REPEATS_1"/>
    <property type="match status" value="1"/>
</dbReference>
<dbReference type="PROSITE" id="PS50082">
    <property type="entry name" value="WD_REPEATS_2"/>
    <property type="match status" value="1"/>
</dbReference>
<dbReference type="PROSITE" id="PS50294">
    <property type="entry name" value="WD_REPEATS_REGION"/>
    <property type="match status" value="1"/>
</dbReference>
<organism evidence="9">
    <name type="scientific">Arabidopsis thaliana</name>
    <name type="common">Mouse-ear cress</name>
    <dbReference type="NCBI Taxonomy" id="3702"/>
    <lineage>
        <taxon>Eukaryota</taxon>
        <taxon>Viridiplantae</taxon>
        <taxon>Streptophyta</taxon>
        <taxon>Embryophyta</taxon>
        <taxon>Tracheophyta</taxon>
        <taxon>Spermatophyta</taxon>
        <taxon>Magnoliopsida</taxon>
        <taxon>eudicotyledons</taxon>
        <taxon>Gunneridae</taxon>
        <taxon>Pentapetalae</taxon>
        <taxon>rosids</taxon>
        <taxon>malvids</taxon>
        <taxon>Brassicales</taxon>
        <taxon>Brassicaceae</taxon>
        <taxon>Camelineae</taxon>
        <taxon>Arabidopsis</taxon>
    </lineage>
</organism>